<dbReference type="EC" id="5.6.1.7" evidence="1"/>
<dbReference type="EMBL" id="CT573213">
    <property type="protein sequence ID" value="CAJ65109.1"/>
    <property type="status" value="ALT_INIT"/>
    <property type="molecule type" value="Genomic_DNA"/>
</dbReference>
<dbReference type="RefSeq" id="WP_011607527.1">
    <property type="nucleotide sequence ID" value="NC_008278.1"/>
</dbReference>
<dbReference type="SMR" id="Q0RBS5"/>
<dbReference type="STRING" id="326424.FRAAL6486"/>
<dbReference type="KEGG" id="fal:FRAAL6486"/>
<dbReference type="eggNOG" id="COG0459">
    <property type="taxonomic scope" value="Bacteria"/>
</dbReference>
<dbReference type="HOGENOM" id="CLU_016503_3_0_11"/>
<dbReference type="OrthoDB" id="9766614at2"/>
<dbReference type="Proteomes" id="UP000000657">
    <property type="component" value="Chromosome"/>
</dbReference>
<dbReference type="GO" id="GO:0005737">
    <property type="term" value="C:cytoplasm"/>
    <property type="evidence" value="ECO:0007669"/>
    <property type="project" value="UniProtKB-SubCell"/>
</dbReference>
<dbReference type="GO" id="GO:0005524">
    <property type="term" value="F:ATP binding"/>
    <property type="evidence" value="ECO:0007669"/>
    <property type="project" value="UniProtKB-UniRule"/>
</dbReference>
<dbReference type="GO" id="GO:0140662">
    <property type="term" value="F:ATP-dependent protein folding chaperone"/>
    <property type="evidence" value="ECO:0007669"/>
    <property type="project" value="InterPro"/>
</dbReference>
<dbReference type="GO" id="GO:0016853">
    <property type="term" value="F:isomerase activity"/>
    <property type="evidence" value="ECO:0007669"/>
    <property type="project" value="UniProtKB-KW"/>
</dbReference>
<dbReference type="GO" id="GO:0051082">
    <property type="term" value="F:unfolded protein binding"/>
    <property type="evidence" value="ECO:0007669"/>
    <property type="project" value="UniProtKB-UniRule"/>
</dbReference>
<dbReference type="GO" id="GO:0042026">
    <property type="term" value="P:protein refolding"/>
    <property type="evidence" value="ECO:0007669"/>
    <property type="project" value="UniProtKB-UniRule"/>
</dbReference>
<dbReference type="CDD" id="cd03344">
    <property type="entry name" value="GroEL"/>
    <property type="match status" value="1"/>
</dbReference>
<dbReference type="FunFam" id="3.50.7.10:FF:000001">
    <property type="entry name" value="60 kDa chaperonin"/>
    <property type="match status" value="1"/>
</dbReference>
<dbReference type="Gene3D" id="3.50.7.10">
    <property type="entry name" value="GroEL"/>
    <property type="match status" value="1"/>
</dbReference>
<dbReference type="Gene3D" id="1.10.560.10">
    <property type="entry name" value="GroEL-like equatorial domain"/>
    <property type="match status" value="1"/>
</dbReference>
<dbReference type="Gene3D" id="3.30.260.10">
    <property type="entry name" value="TCP-1-like chaperonin intermediate domain"/>
    <property type="match status" value="1"/>
</dbReference>
<dbReference type="HAMAP" id="MF_00600">
    <property type="entry name" value="CH60"/>
    <property type="match status" value="1"/>
</dbReference>
<dbReference type="InterPro" id="IPR018370">
    <property type="entry name" value="Chaperonin_Cpn60_CS"/>
</dbReference>
<dbReference type="InterPro" id="IPR001844">
    <property type="entry name" value="Cpn60/GroEL"/>
</dbReference>
<dbReference type="InterPro" id="IPR002423">
    <property type="entry name" value="Cpn60/GroEL/TCP-1"/>
</dbReference>
<dbReference type="InterPro" id="IPR027409">
    <property type="entry name" value="GroEL-like_apical_dom_sf"/>
</dbReference>
<dbReference type="InterPro" id="IPR027413">
    <property type="entry name" value="GROEL-like_equatorial_sf"/>
</dbReference>
<dbReference type="InterPro" id="IPR027410">
    <property type="entry name" value="TCP-1-like_intermed_sf"/>
</dbReference>
<dbReference type="NCBIfam" id="TIGR02348">
    <property type="entry name" value="GroEL"/>
    <property type="match status" value="1"/>
</dbReference>
<dbReference type="NCBIfam" id="NF000592">
    <property type="entry name" value="PRK00013.1"/>
    <property type="match status" value="1"/>
</dbReference>
<dbReference type="NCBIfam" id="NF009487">
    <property type="entry name" value="PRK12849.1"/>
    <property type="match status" value="1"/>
</dbReference>
<dbReference type="NCBIfam" id="NF009488">
    <property type="entry name" value="PRK12850.1"/>
    <property type="match status" value="1"/>
</dbReference>
<dbReference type="NCBIfam" id="NF009489">
    <property type="entry name" value="PRK12851.1"/>
    <property type="match status" value="1"/>
</dbReference>
<dbReference type="PANTHER" id="PTHR45633">
    <property type="entry name" value="60 KDA HEAT SHOCK PROTEIN, MITOCHONDRIAL"/>
    <property type="match status" value="1"/>
</dbReference>
<dbReference type="Pfam" id="PF00118">
    <property type="entry name" value="Cpn60_TCP1"/>
    <property type="match status" value="1"/>
</dbReference>
<dbReference type="PRINTS" id="PR00298">
    <property type="entry name" value="CHAPERONIN60"/>
</dbReference>
<dbReference type="SUPFAM" id="SSF52029">
    <property type="entry name" value="GroEL apical domain-like"/>
    <property type="match status" value="1"/>
</dbReference>
<dbReference type="SUPFAM" id="SSF48592">
    <property type="entry name" value="GroEL equatorial domain-like"/>
    <property type="match status" value="1"/>
</dbReference>
<dbReference type="SUPFAM" id="SSF54849">
    <property type="entry name" value="GroEL-intermediate domain like"/>
    <property type="match status" value="1"/>
</dbReference>
<dbReference type="PROSITE" id="PS00296">
    <property type="entry name" value="CHAPERONINS_CPN60"/>
    <property type="match status" value="1"/>
</dbReference>
<name>CH603_FRAAA</name>
<comment type="function">
    <text evidence="1">Together with its co-chaperonin GroES, plays an essential role in assisting protein folding. The GroEL-GroES system forms a nano-cage that allows encapsulation of the non-native substrate proteins and provides a physical environment optimized to promote and accelerate protein folding.</text>
</comment>
<comment type="catalytic activity">
    <reaction evidence="1">
        <text>ATP + H2O + a folded polypeptide = ADP + phosphate + an unfolded polypeptide.</text>
        <dbReference type="EC" id="5.6.1.7"/>
    </reaction>
</comment>
<comment type="subunit">
    <text evidence="1">Forms a cylinder of 14 subunits composed of two heptameric rings stacked back-to-back. Interacts with the co-chaperonin GroES.</text>
</comment>
<comment type="subcellular location">
    <subcellularLocation>
        <location evidence="1">Cytoplasm</location>
    </subcellularLocation>
</comment>
<comment type="similarity">
    <text evidence="1">Belongs to the chaperonin (HSP60) family.</text>
</comment>
<comment type="sequence caution" evidence="2">
    <conflict type="erroneous initiation">
        <sequence resource="EMBL-CDS" id="CAJ65109"/>
    </conflict>
</comment>
<evidence type="ECO:0000255" key="1">
    <source>
        <dbReference type="HAMAP-Rule" id="MF_00600"/>
    </source>
</evidence>
<evidence type="ECO:0000305" key="2"/>
<organism>
    <name type="scientific">Frankia alni (strain DSM 45986 / CECT 9034 / ACN14a)</name>
    <dbReference type="NCBI Taxonomy" id="326424"/>
    <lineage>
        <taxon>Bacteria</taxon>
        <taxon>Bacillati</taxon>
        <taxon>Actinomycetota</taxon>
        <taxon>Actinomycetes</taxon>
        <taxon>Frankiales</taxon>
        <taxon>Frankiaceae</taxon>
        <taxon>Frankia</taxon>
    </lineage>
</organism>
<sequence length="542" mass="57106">MAKMIAFDEEARRGLERGMNRLADAVKVTLGPKGRNVVLANKFGLPTITNDGVSIAREIELENSYERIGAELVKEVAKKTNDVAGDGTTTATILAQALVREGLRNVAAGANPLGLKKGIEVAVERVSEELSKQAKEVETKEQIASTASISAGDSAIGGLIAEALDKVGKEGVVTVEESNTFGLELELTEGMRFDKGYISPYFVTDADRQEAVLDDPYILIVNSKIAAVKDLLPLLEKVMQTSKPLVIISEDVEGEALATLVVNKIRGTFKSVAVKAPGFGDRRKAILGDIAILTGGQVISEDVGLKLESTSLDLLGRARKIVVTKDETTVVEGSGDPDQIAGRVSQIRNEIDKSDSDYDREKLQERLAKLAGGVAVIKVGAATEVELKEKKHRIEDAVSNAKAAVEEGIVAGGGVALLQASITAFEKLDLSGDEATGANIVRLALEAPIKQIAFNSGLEGGVVVDKVRNLPTGHGLNAATGEYVDLIATGIIDPAKVTRSALQNAASIAGLFLTTEAVVANTPEYAEADAANVDAAMRSQGF</sequence>
<feature type="chain" id="PRO_0000332004" description="Chaperonin GroEL 3">
    <location>
        <begin position="1"/>
        <end position="542"/>
    </location>
</feature>
<feature type="binding site" evidence="1">
    <location>
        <begin position="29"/>
        <end position="32"/>
    </location>
    <ligand>
        <name>ATP</name>
        <dbReference type="ChEBI" id="CHEBI:30616"/>
    </ligand>
</feature>
<feature type="binding site" evidence="1">
    <location>
        <begin position="86"/>
        <end position="90"/>
    </location>
    <ligand>
        <name>ATP</name>
        <dbReference type="ChEBI" id="CHEBI:30616"/>
    </ligand>
</feature>
<feature type="binding site" evidence="1">
    <location>
        <position position="413"/>
    </location>
    <ligand>
        <name>ATP</name>
        <dbReference type="ChEBI" id="CHEBI:30616"/>
    </ligand>
</feature>
<feature type="binding site" evidence="1">
    <location>
        <begin position="477"/>
        <end position="479"/>
    </location>
    <ligand>
        <name>ATP</name>
        <dbReference type="ChEBI" id="CHEBI:30616"/>
    </ligand>
</feature>
<feature type="binding site" evidence="1">
    <location>
        <position position="493"/>
    </location>
    <ligand>
        <name>ATP</name>
        <dbReference type="ChEBI" id="CHEBI:30616"/>
    </ligand>
</feature>
<protein>
    <recommendedName>
        <fullName evidence="1">Chaperonin GroEL 3</fullName>
        <ecNumber evidence="1">5.6.1.7</ecNumber>
    </recommendedName>
    <alternativeName>
        <fullName evidence="1">60 kDa chaperonin 3</fullName>
    </alternativeName>
    <alternativeName>
        <fullName evidence="1">Chaperonin-60 3</fullName>
        <shortName evidence="1">Cpn60 3</shortName>
    </alternativeName>
</protein>
<proteinExistence type="inferred from homology"/>
<accession>Q0RBS5</accession>
<gene>
    <name evidence="1" type="primary">groEL3</name>
    <name evidence="1" type="synonym">groL3</name>
    <name type="ordered locus">FRAAL6486</name>
</gene>
<keyword id="KW-0067">ATP-binding</keyword>
<keyword id="KW-0143">Chaperone</keyword>
<keyword id="KW-0963">Cytoplasm</keyword>
<keyword id="KW-0413">Isomerase</keyword>
<keyword id="KW-0547">Nucleotide-binding</keyword>
<keyword id="KW-1185">Reference proteome</keyword>
<reference key="1">
    <citation type="journal article" date="2007" name="Genome Res.">
        <title>Genome characteristics of facultatively symbiotic Frankia sp. strains reflect host range and host plant biogeography.</title>
        <authorList>
            <person name="Normand P."/>
            <person name="Lapierre P."/>
            <person name="Tisa L.S."/>
            <person name="Gogarten J.P."/>
            <person name="Alloisio N."/>
            <person name="Bagnarol E."/>
            <person name="Bassi C.A."/>
            <person name="Berry A.M."/>
            <person name="Bickhart D.M."/>
            <person name="Choisne N."/>
            <person name="Couloux A."/>
            <person name="Cournoyer B."/>
            <person name="Cruveiller S."/>
            <person name="Daubin V."/>
            <person name="Demange N."/>
            <person name="Francino M.P."/>
            <person name="Goltsman E."/>
            <person name="Huang Y."/>
            <person name="Kopp O.R."/>
            <person name="Labarre L."/>
            <person name="Lapidus A."/>
            <person name="Lavire C."/>
            <person name="Marechal J."/>
            <person name="Martinez M."/>
            <person name="Mastronunzio J.E."/>
            <person name="Mullin B.C."/>
            <person name="Niemann J."/>
            <person name="Pujic P."/>
            <person name="Rawnsley T."/>
            <person name="Rouy Z."/>
            <person name="Schenowitz C."/>
            <person name="Sellstedt A."/>
            <person name="Tavares F."/>
            <person name="Tomkins J.P."/>
            <person name="Vallenet D."/>
            <person name="Valverde C."/>
            <person name="Wall L.G."/>
            <person name="Wang Y."/>
            <person name="Medigue C."/>
            <person name="Benson D.R."/>
        </authorList>
    </citation>
    <scope>NUCLEOTIDE SEQUENCE [LARGE SCALE GENOMIC DNA]</scope>
    <source>
        <strain>DSM 45986 / CECT 9034 / ACN14a</strain>
    </source>
</reference>